<sequence>MFEKVNRSGLIIYLYYNRDAKKLQDYGDITYHSKKHRYLQLYVPTQEVEQLVGRLSKEKFIKKVRVCHIQELETPFVGNLYR</sequence>
<gene>
    <name type="ordered locus">SPJ_0686</name>
</gene>
<accession>C1CD97</accession>
<keyword id="KW-0963">Cytoplasm</keyword>
<reference key="1">
    <citation type="journal article" date="2010" name="Genome Biol.">
        <title>Structure and dynamics of the pan-genome of Streptococcus pneumoniae and closely related species.</title>
        <authorList>
            <person name="Donati C."/>
            <person name="Hiller N.L."/>
            <person name="Tettelin H."/>
            <person name="Muzzi A."/>
            <person name="Croucher N.J."/>
            <person name="Angiuoli S.V."/>
            <person name="Oggioni M."/>
            <person name="Dunning Hotopp J.C."/>
            <person name="Hu F.Z."/>
            <person name="Riley D.R."/>
            <person name="Covacci A."/>
            <person name="Mitchell T.J."/>
            <person name="Bentley S.D."/>
            <person name="Kilian M."/>
            <person name="Ehrlich G.D."/>
            <person name="Rappuoli R."/>
            <person name="Moxon E.R."/>
            <person name="Masignani V."/>
        </authorList>
    </citation>
    <scope>NUCLEOTIDE SEQUENCE [LARGE SCALE GENOMIC DNA]</scope>
    <source>
        <strain>JJA</strain>
    </source>
</reference>
<proteinExistence type="inferred from homology"/>
<name>Y686_STRZJ</name>
<protein>
    <recommendedName>
        <fullName evidence="1">UPF0298 protein SPJ_0686</fullName>
    </recommendedName>
</protein>
<feature type="chain" id="PRO_1000164066" description="UPF0298 protein SPJ_0686">
    <location>
        <begin position="1"/>
        <end position="82"/>
    </location>
</feature>
<dbReference type="EMBL" id="CP000919">
    <property type="protein sequence ID" value="ACO19638.1"/>
    <property type="molecule type" value="Genomic_DNA"/>
</dbReference>
<dbReference type="RefSeq" id="WP_000462126.1">
    <property type="nucleotide sequence ID" value="NC_012466.1"/>
</dbReference>
<dbReference type="SMR" id="C1CD97"/>
<dbReference type="KEGG" id="sjj:SPJ_0686"/>
<dbReference type="HOGENOM" id="CLU_159890_1_0_9"/>
<dbReference type="Proteomes" id="UP000002206">
    <property type="component" value="Chromosome"/>
</dbReference>
<dbReference type="GO" id="GO:0005737">
    <property type="term" value="C:cytoplasm"/>
    <property type="evidence" value="ECO:0007669"/>
    <property type="project" value="UniProtKB-SubCell"/>
</dbReference>
<dbReference type="HAMAP" id="MF_01126">
    <property type="entry name" value="UPF0298"/>
    <property type="match status" value="1"/>
</dbReference>
<dbReference type="InterPro" id="IPR016979">
    <property type="entry name" value="DUF2129"/>
</dbReference>
<dbReference type="NCBIfam" id="NF002631">
    <property type="entry name" value="PRK02302.1"/>
    <property type="match status" value="1"/>
</dbReference>
<dbReference type="Pfam" id="PF09902">
    <property type="entry name" value="DUF2129"/>
    <property type="match status" value="1"/>
</dbReference>
<dbReference type="PIRSF" id="PIRSF031653">
    <property type="entry name" value="UCP031653"/>
    <property type="match status" value="1"/>
</dbReference>
<organism>
    <name type="scientific">Streptococcus pneumoniae (strain JJA)</name>
    <dbReference type="NCBI Taxonomy" id="488222"/>
    <lineage>
        <taxon>Bacteria</taxon>
        <taxon>Bacillati</taxon>
        <taxon>Bacillota</taxon>
        <taxon>Bacilli</taxon>
        <taxon>Lactobacillales</taxon>
        <taxon>Streptococcaceae</taxon>
        <taxon>Streptococcus</taxon>
    </lineage>
</organism>
<evidence type="ECO:0000255" key="1">
    <source>
        <dbReference type="HAMAP-Rule" id="MF_01126"/>
    </source>
</evidence>
<comment type="subcellular location">
    <subcellularLocation>
        <location evidence="1">Cytoplasm</location>
    </subcellularLocation>
</comment>
<comment type="similarity">
    <text evidence="1">Belongs to the UPF0298 family.</text>
</comment>